<proteinExistence type="evidence at protein level"/>
<comment type="function">
    <text evidence="2 3">NDH-1 shuttles electrons from NADH, via FMN and iron-sulfur (Fe-S) centers, to quinones in the respiratory chain. The immediate electron acceptor for the enzyme in this species is menaquinone. Couples the redox reaction to proton translocation (for every two electrons transferred, four hydrogen ions are translocated across the cytoplasmic membrane), and thus conserves the redox energy in a proton gradient required for the synthesis of ATP. The Nqo5 subunit may be involved in the stabilization of the complex.</text>
</comment>
<comment type="catalytic activity">
    <reaction evidence="1 2">
        <text>a quinone + NADH + 5 H(+)(in) = a quinol + NAD(+) + 4 H(+)(out)</text>
        <dbReference type="Rhea" id="RHEA:57888"/>
        <dbReference type="ChEBI" id="CHEBI:15378"/>
        <dbReference type="ChEBI" id="CHEBI:24646"/>
        <dbReference type="ChEBI" id="CHEBI:57540"/>
        <dbReference type="ChEBI" id="CHEBI:57945"/>
        <dbReference type="ChEBI" id="CHEBI:132124"/>
    </reaction>
</comment>
<comment type="subunit">
    <text evidence="2 3">NDH-1 is composed of 15 different subunits, Nqo1 to Nqo15. The complex has a L-shaped structure, with the hydrophobic arm (subunits Nqo7, Nqo8 and Nqo10 to Nqo14) embedded in the membrane and the hydrophilic peripheral arm (subunits Nqo1 to Nqo6, Nqo9 and Nqo15) protruding into the bacterial cytoplasm. The hydrophilic domain contains all the redox centers. The N-terminal domain of this subunit (residues 1 to 153) wraps around Nqo4 on one side, and the subunit also interacts with Nqo9 via a two-stranded beta sheet (residues 154 to 171) and with Nqo3 via an extended C-terminal loop (residues 172 to 196).</text>
</comment>
<comment type="subcellular location">
    <subcellularLocation>
        <location evidence="4">Cell membrane</location>
        <topology evidence="4">Peripheral membrane protein</topology>
        <orientation evidence="4">Cytoplasmic side</orientation>
    </subcellularLocation>
</comment>
<comment type="similarity">
    <text evidence="1">Belongs to the complex I 30 kDa subunit family.</text>
</comment>
<keyword id="KW-0002">3D-structure</keyword>
<keyword id="KW-1003">Cell membrane</keyword>
<keyword id="KW-0903">Direct protein sequencing</keyword>
<keyword id="KW-0472">Membrane</keyword>
<keyword id="KW-0520">NAD</keyword>
<keyword id="KW-0874">Quinone</keyword>
<keyword id="KW-1185">Reference proteome</keyword>
<keyword id="KW-1278">Translocase</keyword>
<keyword id="KW-0813">Transport</keyword>
<sequence length="207" mass="23859">MRLERVLEEARAKGYPIEDNGLGNLWVVLPRERFKEEMAHYKAMGFNFLADIVGLDYLTYPDPRPERFAVVYELVSLPGWKDGDGSRFFVRVYVPEEDPRLPTVTDLWGSANFLEREVYDLFGIVFEGHPDLRKILTPEDLEGHPLRKDYPLGETPTLFREGRYIIPAEFRAALTGKDPGLTFYKGGSRKGYRSLWADLKKAREVKG</sequence>
<dbReference type="EC" id="7.1.1.-" evidence="1 2"/>
<dbReference type="EMBL" id="U52917">
    <property type="protein sequence ID" value="AAA97940.1"/>
    <property type="molecule type" value="Genomic_DNA"/>
</dbReference>
<dbReference type="EMBL" id="AP008226">
    <property type="protein sequence ID" value="BAD69909.1"/>
    <property type="molecule type" value="Genomic_DNA"/>
</dbReference>
<dbReference type="PIR" id="T11900">
    <property type="entry name" value="T11900"/>
</dbReference>
<dbReference type="RefSeq" id="WP_011174270.1">
    <property type="nucleotide sequence ID" value="NC_006461.1"/>
</dbReference>
<dbReference type="RefSeq" id="YP_143352.1">
    <property type="nucleotide sequence ID" value="NC_006461.1"/>
</dbReference>
<dbReference type="PDB" id="2FUG">
    <property type="method" value="X-ray"/>
    <property type="resolution" value="3.30 A"/>
    <property type="chains" value="5/E/N/W=1-207"/>
</dbReference>
<dbReference type="PDB" id="2YBB">
    <property type="method" value="EM"/>
    <property type="resolution" value="19.00 A"/>
    <property type="chains" value="5=1-207"/>
</dbReference>
<dbReference type="PDB" id="3I9V">
    <property type="method" value="X-ray"/>
    <property type="resolution" value="3.10 A"/>
    <property type="chains" value="5/E=1-207"/>
</dbReference>
<dbReference type="PDB" id="3IAM">
    <property type="method" value="X-ray"/>
    <property type="resolution" value="3.10 A"/>
    <property type="chains" value="5/E=1-207"/>
</dbReference>
<dbReference type="PDB" id="3IAS">
    <property type="method" value="X-ray"/>
    <property type="resolution" value="3.15 A"/>
    <property type="chains" value="5/E/N/W=1-207"/>
</dbReference>
<dbReference type="PDB" id="3M9S">
    <property type="method" value="X-ray"/>
    <property type="resolution" value="4.50 A"/>
    <property type="chains" value="5/E=1-207"/>
</dbReference>
<dbReference type="PDB" id="4HEA">
    <property type="method" value="X-ray"/>
    <property type="resolution" value="3.30 A"/>
    <property type="chains" value="5/F=1-207"/>
</dbReference>
<dbReference type="PDB" id="5B3P">
    <property type="method" value="X-ray"/>
    <property type="resolution" value="1.65 A"/>
    <property type="chains" value="A=1-134"/>
</dbReference>
<dbReference type="PDB" id="5B3Q">
    <property type="method" value="X-ray"/>
    <property type="resolution" value="3.00 A"/>
    <property type="chains" value="A=1-134"/>
</dbReference>
<dbReference type="PDB" id="6I0D">
    <property type="method" value="X-ray"/>
    <property type="resolution" value="3.60 A"/>
    <property type="chains" value="5/F=1-207"/>
</dbReference>
<dbReference type="PDB" id="6I1P">
    <property type="method" value="X-ray"/>
    <property type="resolution" value="3.21 A"/>
    <property type="chains" value="5/F=1-207"/>
</dbReference>
<dbReference type="PDB" id="6Q8O">
    <property type="method" value="X-ray"/>
    <property type="resolution" value="3.60 A"/>
    <property type="chains" value="5/F=1-207"/>
</dbReference>
<dbReference type="PDB" id="6Q8W">
    <property type="method" value="X-ray"/>
    <property type="resolution" value="3.40 A"/>
    <property type="chains" value="5/F=1-207"/>
</dbReference>
<dbReference type="PDB" id="6Q8X">
    <property type="method" value="X-ray"/>
    <property type="resolution" value="3.51 A"/>
    <property type="chains" value="5/F=1-207"/>
</dbReference>
<dbReference type="PDB" id="6Y11">
    <property type="method" value="X-ray"/>
    <property type="resolution" value="3.11 A"/>
    <property type="chains" value="5/F=1-207"/>
</dbReference>
<dbReference type="PDB" id="6ZIY">
    <property type="method" value="EM"/>
    <property type="resolution" value="4.25 A"/>
    <property type="chains" value="5=1-207"/>
</dbReference>
<dbReference type="PDB" id="6ZJL">
    <property type="method" value="EM"/>
    <property type="resolution" value="4.30 A"/>
    <property type="chains" value="5=1-207"/>
</dbReference>
<dbReference type="PDB" id="6ZJN">
    <property type="method" value="EM"/>
    <property type="resolution" value="6.10 A"/>
    <property type="chains" value="5=1-207"/>
</dbReference>
<dbReference type="PDB" id="6ZJY">
    <property type="method" value="EM"/>
    <property type="resolution" value="5.50 A"/>
    <property type="chains" value="5=1-207"/>
</dbReference>
<dbReference type="PDBsum" id="2FUG"/>
<dbReference type="PDBsum" id="2YBB"/>
<dbReference type="PDBsum" id="3I9V"/>
<dbReference type="PDBsum" id="3IAM"/>
<dbReference type="PDBsum" id="3IAS"/>
<dbReference type="PDBsum" id="3M9S"/>
<dbReference type="PDBsum" id="4HEA"/>
<dbReference type="PDBsum" id="5B3P"/>
<dbReference type="PDBsum" id="5B3Q"/>
<dbReference type="PDBsum" id="6I0D"/>
<dbReference type="PDBsum" id="6I1P"/>
<dbReference type="PDBsum" id="6Q8O"/>
<dbReference type="PDBsum" id="6Q8W"/>
<dbReference type="PDBsum" id="6Q8X"/>
<dbReference type="PDBsum" id="6Y11"/>
<dbReference type="PDBsum" id="6ZIY"/>
<dbReference type="PDBsum" id="6ZJL"/>
<dbReference type="PDBsum" id="6ZJN"/>
<dbReference type="PDBsum" id="6ZJY"/>
<dbReference type="EMDB" id="EMD-11231"/>
<dbReference type="EMDB" id="EMD-11235"/>
<dbReference type="EMDB" id="EMD-11237"/>
<dbReference type="EMDB" id="EMD-11238"/>
<dbReference type="SMR" id="Q56219"/>
<dbReference type="DIP" id="DIP-59263N"/>
<dbReference type="IntAct" id="Q56219">
    <property type="interactions" value="1"/>
</dbReference>
<dbReference type="TCDB" id="3.D.1.3.1">
    <property type="family name" value="the h+ or na+-translocating nadh dehydrogenase (ndh) family"/>
</dbReference>
<dbReference type="EnsemblBacteria" id="BAD69909">
    <property type="protein sequence ID" value="BAD69909"/>
    <property type="gene ID" value="BAD69909"/>
</dbReference>
<dbReference type="GeneID" id="3168317"/>
<dbReference type="KEGG" id="ttj:TTHA0086"/>
<dbReference type="PATRIC" id="fig|300852.9.peg.84"/>
<dbReference type="eggNOG" id="COG0852">
    <property type="taxonomic scope" value="Bacteria"/>
</dbReference>
<dbReference type="HOGENOM" id="CLU_042628_5_0_0"/>
<dbReference type="PhylomeDB" id="Q56219"/>
<dbReference type="EvolutionaryTrace" id="Q56219"/>
<dbReference type="Proteomes" id="UP000000532">
    <property type="component" value="Chromosome"/>
</dbReference>
<dbReference type="GO" id="GO:0005886">
    <property type="term" value="C:plasma membrane"/>
    <property type="evidence" value="ECO:0007669"/>
    <property type="project" value="UniProtKB-SubCell"/>
</dbReference>
<dbReference type="GO" id="GO:0008137">
    <property type="term" value="F:NADH dehydrogenase (ubiquinone) activity"/>
    <property type="evidence" value="ECO:0007669"/>
    <property type="project" value="InterPro"/>
</dbReference>
<dbReference type="GO" id="GO:0050136">
    <property type="term" value="F:NADH:ubiquinone reductase (non-electrogenic) activity"/>
    <property type="evidence" value="ECO:0007669"/>
    <property type="project" value="UniProtKB-UniRule"/>
</dbReference>
<dbReference type="GO" id="GO:0048038">
    <property type="term" value="F:quinone binding"/>
    <property type="evidence" value="ECO:0007669"/>
    <property type="project" value="UniProtKB-KW"/>
</dbReference>
<dbReference type="Gene3D" id="3.30.460.80">
    <property type="entry name" value="NADH:ubiquinone oxidoreductase, 30kDa subunit"/>
    <property type="match status" value="1"/>
</dbReference>
<dbReference type="HAMAP" id="MF_01357">
    <property type="entry name" value="NDH1_NuoC"/>
    <property type="match status" value="1"/>
</dbReference>
<dbReference type="InterPro" id="IPR010218">
    <property type="entry name" value="NADH_DH_suC"/>
</dbReference>
<dbReference type="InterPro" id="IPR037232">
    <property type="entry name" value="NADH_quin_OxRdtase_su_C/D-like"/>
</dbReference>
<dbReference type="InterPro" id="IPR001268">
    <property type="entry name" value="NADH_UbQ_OxRdtase_30kDa_su"/>
</dbReference>
<dbReference type="InterPro" id="IPR020396">
    <property type="entry name" value="NADH_UbQ_OxRdtase_CS"/>
</dbReference>
<dbReference type="PANTHER" id="PTHR10884:SF14">
    <property type="entry name" value="NADH DEHYDROGENASE [UBIQUINONE] IRON-SULFUR PROTEIN 3, MITOCHONDRIAL"/>
    <property type="match status" value="1"/>
</dbReference>
<dbReference type="PANTHER" id="PTHR10884">
    <property type="entry name" value="NADH DEHYDROGENASE UBIQUINONE IRON-SULFUR PROTEIN 3"/>
    <property type="match status" value="1"/>
</dbReference>
<dbReference type="Pfam" id="PF00329">
    <property type="entry name" value="Complex1_30kDa"/>
    <property type="match status" value="1"/>
</dbReference>
<dbReference type="SUPFAM" id="SSF143243">
    <property type="entry name" value="Nqo5-like"/>
    <property type="match status" value="1"/>
</dbReference>
<dbReference type="PROSITE" id="PS00542">
    <property type="entry name" value="COMPLEX1_30K"/>
    <property type="match status" value="1"/>
</dbReference>
<evidence type="ECO:0000255" key="1">
    <source>
        <dbReference type="HAMAP-Rule" id="MF_01357"/>
    </source>
</evidence>
<evidence type="ECO:0000269" key="2">
    <source>
    </source>
</evidence>
<evidence type="ECO:0000269" key="3">
    <source>
    </source>
</evidence>
<evidence type="ECO:0000305" key="4">
    <source>
    </source>
</evidence>
<evidence type="ECO:0007829" key="5">
    <source>
        <dbReference type="PDB" id="2FUG"/>
    </source>
</evidence>
<evidence type="ECO:0007829" key="6">
    <source>
        <dbReference type="PDB" id="3I9V"/>
    </source>
</evidence>
<evidence type="ECO:0007829" key="7">
    <source>
        <dbReference type="PDB" id="3IAS"/>
    </source>
</evidence>
<evidence type="ECO:0007829" key="8">
    <source>
        <dbReference type="PDB" id="5B3P"/>
    </source>
</evidence>
<evidence type="ECO:0007829" key="9">
    <source>
        <dbReference type="PDB" id="5B3Q"/>
    </source>
</evidence>
<evidence type="ECO:0007829" key="10">
    <source>
        <dbReference type="PDB" id="6Y11"/>
    </source>
</evidence>
<gene>
    <name type="primary">nqo5</name>
    <name type="ordered locus">TTHA0086</name>
</gene>
<name>NQO5_THET8</name>
<protein>
    <recommendedName>
        <fullName>NADH-quinone oxidoreductase subunit 5</fullName>
        <ecNumber evidence="1 2">7.1.1.-</ecNumber>
    </recommendedName>
    <alternativeName>
        <fullName>NADH dehydrogenase I chain 5</fullName>
    </alternativeName>
    <alternativeName>
        <fullName>NDH-1 subunit 5</fullName>
    </alternativeName>
</protein>
<accession>Q56219</accession>
<accession>Q5SM57</accession>
<reference key="1">
    <citation type="journal article" date="1997" name="J. Biol. Chem.">
        <title>The proton-translocating NADH-quinone oxidoreductase (NDH-1) of thermophilic bacterium Thermus thermophilus HB-8. Complete DNA sequence of the gene cluster and thermostable properties of the expressed NQO2 subunit.</title>
        <authorList>
            <person name="Yano T."/>
            <person name="Chu S.S."/>
            <person name="Sled' V.D."/>
            <person name="Ohnishi T."/>
            <person name="Yagi T."/>
        </authorList>
    </citation>
    <scope>NUCLEOTIDE SEQUENCE [GENOMIC DNA]</scope>
    <source>
        <strain>ATCC 27634 / DSM 579 / HB8</strain>
    </source>
</reference>
<reference key="2">
    <citation type="submission" date="2004-11" db="EMBL/GenBank/DDBJ databases">
        <title>Complete genome sequence of Thermus thermophilus HB8.</title>
        <authorList>
            <person name="Masui R."/>
            <person name="Kurokawa K."/>
            <person name="Nakagawa N."/>
            <person name="Tokunaga F."/>
            <person name="Koyama Y."/>
            <person name="Shibata T."/>
            <person name="Oshima T."/>
            <person name="Yokoyama S."/>
            <person name="Yasunaga T."/>
            <person name="Kuramitsu S."/>
        </authorList>
    </citation>
    <scope>NUCLEOTIDE SEQUENCE [LARGE SCALE GENOMIC DNA]</scope>
    <source>
        <strain>ATCC 27634 / DSM 579 / HB8</strain>
    </source>
</reference>
<reference key="3">
    <citation type="journal article" date="2006" name="Biochemistry">
        <title>Identification of a novel subunit of respiratory complex I from Thermus thermophilus.</title>
        <authorList>
            <person name="Hinchliffe P."/>
            <person name="Carroll J."/>
            <person name="Sazanov L.A."/>
        </authorList>
    </citation>
    <scope>PROTEIN SEQUENCE OF 1-8</scope>
    <scope>IDENTIFICATION BY MASS SPECTROMETRY</scope>
    <scope>FUNCTION</scope>
    <scope>SUBUNIT</scope>
    <source>
        <strain>ATCC 27634 / DSM 579 / HB8</strain>
    </source>
</reference>
<reference key="4">
    <citation type="journal article" date="2006" name="Science">
        <title>Structure of the hydrophilic domain of respiratory complex I from Thermus thermophilus.</title>
        <authorList>
            <person name="Sazanov L.A."/>
            <person name="Hinchliffe P."/>
        </authorList>
    </citation>
    <scope>X-RAY CRYSTALLOGRAPHY (3.3 ANGSTROMS) OF ENZYME HYDROPHILIC DOMAIN</scope>
    <scope>FUNCTION</scope>
    <scope>CATALYTIC ACTIVITY</scope>
    <scope>SUBUNIT</scope>
    <scope>SUBCELLULAR LOCATION</scope>
    <scope>ELECTRON TRANSFER MECHANISM</scope>
</reference>
<organism>
    <name type="scientific">Thermus thermophilus (strain ATCC 27634 / DSM 579 / HB8)</name>
    <dbReference type="NCBI Taxonomy" id="300852"/>
    <lineage>
        <taxon>Bacteria</taxon>
        <taxon>Thermotogati</taxon>
        <taxon>Deinococcota</taxon>
        <taxon>Deinococci</taxon>
        <taxon>Thermales</taxon>
        <taxon>Thermaceae</taxon>
        <taxon>Thermus</taxon>
    </lineage>
</organism>
<feature type="chain" id="PRO_0000118669" description="NADH-quinone oxidoreductase subunit 5">
    <location>
        <begin position="1"/>
        <end position="207"/>
    </location>
</feature>
<feature type="helix" evidence="8">
    <location>
        <begin position="2"/>
        <end position="13"/>
    </location>
</feature>
<feature type="strand" evidence="8">
    <location>
        <begin position="17"/>
        <end position="19"/>
    </location>
</feature>
<feature type="strand" evidence="8">
    <location>
        <begin position="21"/>
        <end position="23"/>
    </location>
</feature>
<feature type="strand" evidence="8">
    <location>
        <begin position="25"/>
        <end position="28"/>
    </location>
</feature>
<feature type="helix" evidence="8">
    <location>
        <begin position="31"/>
        <end position="43"/>
    </location>
</feature>
<feature type="strand" evidence="8">
    <location>
        <begin position="48"/>
        <end position="56"/>
    </location>
</feature>
<feature type="strand" evidence="9">
    <location>
        <begin position="59"/>
        <end position="62"/>
    </location>
</feature>
<feature type="strand" evidence="8">
    <location>
        <begin position="65"/>
        <end position="75"/>
    </location>
</feature>
<feature type="turn" evidence="9">
    <location>
        <begin position="80"/>
        <end position="82"/>
    </location>
</feature>
<feature type="strand" evidence="8">
    <location>
        <begin position="87"/>
        <end position="94"/>
    </location>
</feature>
<feature type="strand" evidence="9">
    <location>
        <begin position="96"/>
        <end position="98"/>
    </location>
</feature>
<feature type="strand" evidence="8">
    <location>
        <begin position="100"/>
        <end position="102"/>
    </location>
</feature>
<feature type="turn" evidence="8">
    <location>
        <begin position="105"/>
        <end position="107"/>
    </location>
</feature>
<feature type="helix" evidence="8">
    <location>
        <begin position="111"/>
        <end position="122"/>
    </location>
</feature>
<feature type="strand" evidence="8">
    <location>
        <begin position="125"/>
        <end position="127"/>
    </location>
</feature>
<feature type="strand" evidence="7">
    <location>
        <begin position="135"/>
        <end position="137"/>
    </location>
</feature>
<feature type="strand" evidence="5">
    <location>
        <begin position="141"/>
        <end position="143"/>
    </location>
</feature>
<feature type="strand" evidence="5">
    <location>
        <begin position="145"/>
        <end position="147"/>
    </location>
</feature>
<feature type="strand" evidence="10">
    <location>
        <begin position="160"/>
        <end position="162"/>
    </location>
</feature>
<feature type="helix" evidence="6">
    <location>
        <begin position="167"/>
        <end position="169"/>
    </location>
</feature>
<feature type="strand" evidence="7">
    <location>
        <begin position="176"/>
        <end position="178"/>
    </location>
</feature>
<feature type="strand" evidence="6">
    <location>
        <begin position="181"/>
        <end position="183"/>
    </location>
</feature>
<feature type="helix" evidence="6">
    <location>
        <begin position="187"/>
        <end position="189"/>
    </location>
</feature>